<organism>
    <name type="scientific">Listeria innocua serovar 6a (strain ATCC BAA-680 / CLIP 11262)</name>
    <dbReference type="NCBI Taxonomy" id="272626"/>
    <lineage>
        <taxon>Bacteria</taxon>
        <taxon>Bacillati</taxon>
        <taxon>Bacillota</taxon>
        <taxon>Bacilli</taxon>
        <taxon>Bacillales</taxon>
        <taxon>Listeriaceae</taxon>
        <taxon>Listeria</taxon>
    </lineage>
</organism>
<proteinExistence type="inferred from homology"/>
<reference key="1">
    <citation type="journal article" date="2001" name="Science">
        <title>Comparative genomics of Listeria species.</title>
        <authorList>
            <person name="Glaser P."/>
            <person name="Frangeul L."/>
            <person name="Buchrieser C."/>
            <person name="Rusniok C."/>
            <person name="Amend A."/>
            <person name="Baquero F."/>
            <person name="Berche P."/>
            <person name="Bloecker H."/>
            <person name="Brandt P."/>
            <person name="Chakraborty T."/>
            <person name="Charbit A."/>
            <person name="Chetouani F."/>
            <person name="Couve E."/>
            <person name="de Daruvar A."/>
            <person name="Dehoux P."/>
            <person name="Domann E."/>
            <person name="Dominguez-Bernal G."/>
            <person name="Duchaud E."/>
            <person name="Durant L."/>
            <person name="Dussurget O."/>
            <person name="Entian K.-D."/>
            <person name="Fsihi H."/>
            <person name="Garcia-del Portillo F."/>
            <person name="Garrido P."/>
            <person name="Gautier L."/>
            <person name="Goebel W."/>
            <person name="Gomez-Lopez N."/>
            <person name="Hain T."/>
            <person name="Hauf J."/>
            <person name="Jackson D."/>
            <person name="Jones L.-M."/>
            <person name="Kaerst U."/>
            <person name="Kreft J."/>
            <person name="Kuhn M."/>
            <person name="Kunst F."/>
            <person name="Kurapkat G."/>
            <person name="Madueno E."/>
            <person name="Maitournam A."/>
            <person name="Mata Vicente J."/>
            <person name="Ng E."/>
            <person name="Nedjari H."/>
            <person name="Nordsiek G."/>
            <person name="Novella S."/>
            <person name="de Pablos B."/>
            <person name="Perez-Diaz J.-C."/>
            <person name="Purcell R."/>
            <person name="Remmel B."/>
            <person name="Rose M."/>
            <person name="Schlueter T."/>
            <person name="Simoes N."/>
            <person name="Tierrez A."/>
            <person name="Vazquez-Boland J.-A."/>
            <person name="Voss H."/>
            <person name="Wehland J."/>
            <person name="Cossart P."/>
        </authorList>
    </citation>
    <scope>NUCLEOTIDE SEQUENCE [LARGE SCALE GENOMIC DNA]</scope>
    <source>
        <strain>ATCC BAA-680 / CLIP 11262</strain>
    </source>
</reference>
<comment type="subunit">
    <text evidence="1">Homodimer.</text>
</comment>
<comment type="similarity">
    <text evidence="1">Belongs to the UPF0210 family.</text>
</comment>
<dbReference type="EMBL" id="AL596165">
    <property type="protein sequence ID" value="CAC95770.1"/>
    <property type="molecule type" value="Genomic_DNA"/>
</dbReference>
<dbReference type="PIR" id="AB1500">
    <property type="entry name" value="AB1500"/>
</dbReference>
<dbReference type="RefSeq" id="WP_010990473.1">
    <property type="nucleotide sequence ID" value="NC_003212.1"/>
</dbReference>
<dbReference type="SMR" id="Q92EC2"/>
<dbReference type="STRING" id="272626.gene:17564864"/>
<dbReference type="KEGG" id="lin:lin0538"/>
<dbReference type="eggNOG" id="COG2848">
    <property type="taxonomic scope" value="Bacteria"/>
</dbReference>
<dbReference type="HOGENOM" id="CLU_048704_0_0_9"/>
<dbReference type="OrthoDB" id="9763001at2"/>
<dbReference type="Proteomes" id="UP000002513">
    <property type="component" value="Chromosome"/>
</dbReference>
<dbReference type="CDD" id="cd08025">
    <property type="entry name" value="RNR_PFL_like_DUF711"/>
    <property type="match status" value="1"/>
</dbReference>
<dbReference type="Gene3D" id="3.20.70.20">
    <property type="match status" value="1"/>
</dbReference>
<dbReference type="HAMAP" id="MF_01221">
    <property type="entry name" value="UPF0210"/>
    <property type="match status" value="1"/>
</dbReference>
<dbReference type="InterPro" id="IPR007841">
    <property type="entry name" value="UPF0210"/>
</dbReference>
<dbReference type="NCBIfam" id="NF003700">
    <property type="entry name" value="PRK05313.1"/>
    <property type="match status" value="1"/>
</dbReference>
<dbReference type="PANTHER" id="PTHR37560:SF1">
    <property type="entry name" value="UPF0210 PROTEIN MJ1665"/>
    <property type="match status" value="1"/>
</dbReference>
<dbReference type="PANTHER" id="PTHR37560">
    <property type="entry name" value="UPF0210 PROTEIN SPR0218"/>
    <property type="match status" value="1"/>
</dbReference>
<dbReference type="Pfam" id="PF05167">
    <property type="entry name" value="DUF711"/>
    <property type="match status" value="1"/>
</dbReference>
<dbReference type="SUPFAM" id="SSF51998">
    <property type="entry name" value="PFL-like glycyl radical enzymes"/>
    <property type="match status" value="1"/>
</dbReference>
<evidence type="ECO:0000255" key="1">
    <source>
        <dbReference type="HAMAP-Rule" id="MF_01221"/>
    </source>
</evidence>
<name>Y538_LISIN</name>
<accession>Q92EC2</accession>
<gene>
    <name type="ordered locus">lin0538</name>
</gene>
<sequence>METNQILETIRMIEEEKLDIRTITMGISLLDCMDGDGEVARKKIYQKIVTKARNLVAVGEAIESEFGIPIINKRISVTPIAIIAGSSADTDYVEFAKTLDAAAKEVGVNFIGGYSALVQKGYTKGDEILIRSIPQALAQTERVCSSVNVGSTRTGINMDAVRQMGEVIKETADLTADTQGLGCAKLVVFANAVEDNPFMAGAFHGVGEADCVINVGVSGPGVVKRAIEKVKGEPFDIVAETVKQTAFKITRMGQLVGQVASEKLGVPFGIVDLSLAPTPAIGDSVAHILEEMGLEMVGTHGTTAALALLNDAVKKGGVMACGHVGGLSGAFIPVSEDAGMIEAVQQGALNLEKLEAMTAICSVGLDMIAVPGDTTAETLAAMIADEAAIGVINNKTTAVRVIPASGTKVGDMVEFGGLLGTAPVMPVNGKSSASFIARGGRIPAPIHSFKN</sequence>
<feature type="chain" id="PRO_0000070556" description="UPF0210 protein lin0538">
    <location>
        <begin position="1"/>
        <end position="451"/>
    </location>
</feature>
<protein>
    <recommendedName>
        <fullName evidence="1">UPF0210 protein lin0538</fullName>
    </recommendedName>
</protein>